<organism>
    <name type="scientific">Caenorhabditis elegans</name>
    <dbReference type="NCBI Taxonomy" id="6239"/>
    <lineage>
        <taxon>Eukaryota</taxon>
        <taxon>Metazoa</taxon>
        <taxon>Ecdysozoa</taxon>
        <taxon>Nematoda</taxon>
        <taxon>Chromadorea</taxon>
        <taxon>Rhabditida</taxon>
        <taxon>Rhabditina</taxon>
        <taxon>Rhabditomorpha</taxon>
        <taxon>Rhabditoidea</taxon>
        <taxon>Rhabditidae</taxon>
        <taxon>Peloderinae</taxon>
        <taxon>Caenorhabditis</taxon>
    </lineage>
</organism>
<sequence length="289" mass="33807">MKLKTRLILSGTILISLAACYFLVLLVLDLEITRDLMTDYVDPRPLQTSYHKLCVIVPYRDRLEELREFSPHMSKFLHNQNVSHHILIINQTDPLRFNRASLINVGWNEADRLGCDYMVMNDVDLLPVNPEVPYDFPGIGVIRHITSPQYHPKYHYEKFIGGILMLTLKDYKKLNGMSNKYWGWGLEDDEFYLRIIDSKLNLTRVSGLSTDSSNTFRHIHGPKRKRDYTPKKNDKNQWEIKRKRDHVSGLHDVRYLIDSRQLLDFSGTSVTIINVALHCDLNWTPYCKS</sequence>
<reference key="1">
    <citation type="journal article" date="1999" name="Proc. Natl. Acad. Sci. U.S.A.">
        <title>Three proteins involved in Caenorhabditis elegans vulval invagination are similar to components of a glycosylation pathway.</title>
        <authorList>
            <person name="Herman T."/>
            <person name="Horvitz H.R."/>
        </authorList>
    </citation>
    <scope>NUCLEOTIDE SEQUENCE [MRNA]</scope>
    <source>
        <strain>Bristol N2</strain>
    </source>
</reference>
<reference key="2">
    <citation type="journal article" date="1994" name="Nature">
        <title>2.2 Mb of contiguous nucleotide sequence from chromosome III of C. elegans.</title>
        <authorList>
            <person name="Wilson R."/>
            <person name="Ainscough R."/>
            <person name="Anderson K."/>
            <person name="Baynes C."/>
            <person name="Berks M."/>
            <person name="Bonfield J."/>
            <person name="Burton J."/>
            <person name="Connell M."/>
            <person name="Copsey T."/>
            <person name="Cooper J."/>
            <person name="Coulson A."/>
            <person name="Craxton M."/>
            <person name="Dear S."/>
            <person name="Du Z."/>
            <person name="Durbin R."/>
            <person name="Favello A."/>
            <person name="Fraser A."/>
            <person name="Fulton L."/>
            <person name="Gardner A."/>
            <person name="Green P."/>
            <person name="Hawkins T."/>
            <person name="Hillier L."/>
            <person name="Jier M."/>
            <person name="Johnston L."/>
            <person name="Jones M."/>
            <person name="Kershaw J."/>
            <person name="Kirsten J."/>
            <person name="Laisster N."/>
            <person name="Latreille P."/>
            <person name="Lightning J."/>
            <person name="Lloyd C."/>
            <person name="Mortimore B."/>
            <person name="O'Callaghan M."/>
            <person name="Parsons J."/>
            <person name="Percy C."/>
            <person name="Rifken L."/>
            <person name="Roopra A."/>
            <person name="Saunders D."/>
            <person name="Shownkeen R."/>
            <person name="Sims M."/>
            <person name="Smaldon N."/>
            <person name="Smith A."/>
            <person name="Smith M."/>
            <person name="Sonnhammer E."/>
            <person name="Staden R."/>
            <person name="Sulston J."/>
            <person name="Thierry-Mieg J."/>
            <person name="Thomas K."/>
            <person name="Vaudin M."/>
            <person name="Vaughan K."/>
            <person name="Waterston R."/>
            <person name="Watson A."/>
            <person name="Weinstock L."/>
            <person name="Wilkinson-Sproat J."/>
            <person name="Wohldman P."/>
        </authorList>
    </citation>
    <scope>NUCLEOTIDE SEQUENCE [LARGE SCALE GENOMIC DNA]</scope>
    <source>
        <strain>Bristol N2</strain>
    </source>
</reference>
<reference key="3">
    <citation type="journal article" date="1998" name="Science">
        <title>Genome sequence of the nematode C. elegans: a platform for investigating biology.</title>
        <authorList>
            <consortium name="The C. elegans sequencing consortium"/>
        </authorList>
    </citation>
    <scope>NUCLEOTIDE SEQUENCE [LARGE SCALE GENOMIC DNA]</scope>
    <source>
        <strain>Bristol N2</strain>
    </source>
</reference>
<reference key="4">
    <citation type="journal article" date="1999" name="Proc. Natl. Acad. Sci. U.S.A.">
        <title>sqv mutants of Caenorhabditis elegans are defective in vulval epithelial invagination.</title>
        <authorList>
            <person name="Herman T."/>
            <person name="Hartwieg E."/>
            <person name="Horvitz H.R."/>
        </authorList>
    </citation>
    <scope>MUTAGENESIS OF GLY-183 AND VAL-275</scope>
</reference>
<reference key="5">
    <citation type="journal article" date="2000" name="Proc. Natl. Acad. Sci. U.S.A.">
        <title>sqv-3, -7, and -8, a set of genes affecting morphogenesis in Caenorhabditis elegans, encode enzymes required for glycosaminoglycan biosynthesis.</title>
        <authorList>
            <person name="Bulik D.A."/>
            <person name="Wei G."/>
            <person name="Toyoda H."/>
            <person name="Kinoshita-Toyoda A."/>
            <person name="Waldrip W.R."/>
            <person name="Esko J.D."/>
            <person name="Robbins P.W."/>
            <person name="Selleck S.B."/>
        </authorList>
    </citation>
    <scope>FUNCTION</scope>
    <scope>CATALYTIC ACTIVITY</scope>
    <scope>BIOPHYSICOCHEMICAL PROPERTIES</scope>
    <scope>PATHWAY</scope>
    <scope>SUBCELLULAR LOCATION</scope>
</reference>
<reference key="6">
    <citation type="journal article" date="2019" name="Genetics">
        <title>N-Glycosylation of the Discoidin Domain Receptor Is Required for Axon Regeneration in Caenorhabditis elegans.</title>
        <authorList>
            <person name="Shimizu T."/>
            <person name="Kato Y."/>
            <person name="Sakai Y."/>
            <person name="Hisamoto N."/>
            <person name="Matsumoto K."/>
        </authorList>
    </citation>
    <scope>FUNCTION</scope>
    <scope>MUTAGENESIS OF 184-TRP--SER-289</scope>
</reference>
<accession>P34548</accession>
<comment type="function">
    <text evidence="4 5 6">Glycosyltransferase required for the biosynthesis of the tetrasaccharide (GlcA-Gal-Gal-Xyl-)Ser core linker of heparan sulfate and chondroitin sulfate. Required for embryonic development (PubMed:11005858). Involved in vulval epithelium invagination (PubMed:9927677). Required for axon regeneration after injury (PubMed:31371405).</text>
</comment>
<comment type="catalytic activity">
    <reaction evidence="4">
        <text>3-O-(beta-D-xylosyl)-L-seryl-[protein] + UDP-alpha-D-galactose = 3-O-(beta-D-galactosyl-(1-&gt;4)-beta-D-xylosyl)-L-seryl-[protein] + UDP + H(+)</text>
        <dbReference type="Rhea" id="RHEA:15297"/>
        <dbReference type="Rhea" id="RHEA-COMP:12567"/>
        <dbReference type="Rhea" id="RHEA-COMP:12570"/>
        <dbReference type="ChEBI" id="CHEBI:15378"/>
        <dbReference type="ChEBI" id="CHEBI:58223"/>
        <dbReference type="ChEBI" id="CHEBI:66914"/>
        <dbReference type="ChEBI" id="CHEBI:132085"/>
        <dbReference type="ChEBI" id="CHEBI:132088"/>
        <dbReference type="EC" id="2.4.1.133"/>
    </reaction>
</comment>
<comment type="cofactor">
    <cofactor evidence="1">
        <name>Mn(2+)</name>
        <dbReference type="ChEBI" id="CHEBI:29035"/>
    </cofactor>
</comment>
<comment type="biophysicochemical properties">
    <kinetics>
        <KM evidence="4">47 uM for beta-xylose nitrophenyl (at 17 degrees Celsius)</KM>
        <KM evidence="4">440 uM for beta-N-acetylglucosamine nitrophenyl (at 17 degrees Celsius)</KM>
        <KM evidence="4">680 uM for alpha-N-acetylglucosamine nitrophenyl (at 17 degrees Celsius)</KM>
    </kinetics>
</comment>
<comment type="pathway">
    <text evidence="4">Protein modification; protein glycosylation.</text>
</comment>
<comment type="subcellular location">
    <subcellularLocation>
        <location evidence="4">Membrane</location>
        <topology evidence="7">Single-pass type II membrane protein</topology>
    </subcellularLocation>
</comment>
<comment type="similarity">
    <text evidence="7">Belongs to the glycosyltransferase 7 family.</text>
</comment>
<keyword id="KW-0325">Glycoprotein</keyword>
<keyword id="KW-0328">Glycosyltransferase</keyword>
<keyword id="KW-0460">Magnesium</keyword>
<keyword id="KW-0464">Manganese</keyword>
<keyword id="KW-0472">Membrane</keyword>
<keyword id="KW-0479">Metal-binding</keyword>
<keyword id="KW-1185">Reference proteome</keyword>
<keyword id="KW-0735">Signal-anchor</keyword>
<keyword id="KW-0808">Transferase</keyword>
<keyword id="KW-0812">Transmembrane</keyword>
<keyword id="KW-1133">Transmembrane helix</keyword>
<evidence type="ECO:0000250" key="1">
    <source>
        <dbReference type="UniProtKB" id="Q9UBV7"/>
    </source>
</evidence>
<evidence type="ECO:0000255" key="2"/>
<evidence type="ECO:0000256" key="3">
    <source>
        <dbReference type="SAM" id="MobiDB-lite"/>
    </source>
</evidence>
<evidence type="ECO:0000269" key="4">
    <source>
    </source>
</evidence>
<evidence type="ECO:0000269" key="5">
    <source>
    </source>
</evidence>
<evidence type="ECO:0000269" key="6">
    <source>
    </source>
</evidence>
<evidence type="ECO:0000305" key="7"/>
<evidence type="ECO:0000305" key="8">
    <source>
    </source>
</evidence>
<feature type="chain" id="PRO_0000080552" description="Xylosylprotein 4-beta-galactosyltransferase">
    <location>
        <begin position="1"/>
        <end position="289"/>
    </location>
</feature>
<feature type="topological domain" description="Cytoplasmic" evidence="2">
    <location>
        <begin position="1"/>
        <end position="6"/>
    </location>
</feature>
<feature type="transmembrane region" description="Helical; Signal-anchor for type II membrane protein" evidence="2">
    <location>
        <begin position="7"/>
        <end position="27"/>
    </location>
</feature>
<feature type="topological domain" description="Lumenal" evidence="2">
    <location>
        <begin position="28"/>
        <end position="289"/>
    </location>
</feature>
<feature type="region of interest" description="Disordered" evidence="3">
    <location>
        <begin position="214"/>
        <end position="236"/>
    </location>
</feature>
<feature type="compositionally biased region" description="Basic residues" evidence="3">
    <location>
        <begin position="217"/>
        <end position="226"/>
    </location>
</feature>
<feature type="compositionally biased region" description="Basic and acidic residues" evidence="3">
    <location>
        <begin position="227"/>
        <end position="236"/>
    </location>
</feature>
<feature type="binding site" evidence="1">
    <location>
        <begin position="58"/>
        <end position="62"/>
    </location>
    <ligand>
        <name>UDP-alpha-D-galactose</name>
        <dbReference type="ChEBI" id="CHEBI:66914"/>
    </ligand>
</feature>
<feature type="binding site" evidence="1">
    <location>
        <begin position="97"/>
        <end position="99"/>
    </location>
    <ligand>
        <name>UDP-alpha-D-galactose</name>
        <dbReference type="ChEBI" id="CHEBI:66914"/>
    </ligand>
</feature>
<feature type="binding site" evidence="1">
    <location>
        <begin position="123"/>
        <end position="124"/>
    </location>
    <ligand>
        <name>UDP-alpha-D-galactose</name>
        <dbReference type="ChEBI" id="CHEBI:66914"/>
    </ligand>
</feature>
<feature type="binding site" evidence="1">
    <location>
        <position position="124"/>
    </location>
    <ligand>
        <name>Mn(2+)</name>
        <dbReference type="ChEBI" id="CHEBI:29035"/>
    </ligand>
</feature>
<feature type="binding site" evidence="1">
    <location>
        <position position="154"/>
    </location>
    <ligand>
        <name>UDP-alpha-D-galactose</name>
        <dbReference type="ChEBI" id="CHEBI:66914"/>
    </ligand>
</feature>
<feature type="binding site" evidence="1">
    <location>
        <position position="184"/>
    </location>
    <ligand>
        <name>UDP-alpha-D-galactose</name>
        <dbReference type="ChEBI" id="CHEBI:66914"/>
    </ligand>
</feature>
<feature type="binding site" evidence="7">
    <location>
        <begin position="186"/>
        <end position="189"/>
    </location>
    <ligand>
        <name>N-acetyl-D-glucosamine</name>
        <dbReference type="ChEBI" id="CHEBI:506227"/>
    </ligand>
</feature>
<feature type="binding site" evidence="1">
    <location>
        <begin position="218"/>
        <end position="220"/>
    </location>
    <ligand>
        <name>UDP-alpha-D-galactose</name>
        <dbReference type="ChEBI" id="CHEBI:66914"/>
    </ligand>
</feature>
<feature type="binding site" evidence="1">
    <location>
        <position position="218"/>
    </location>
    <ligand>
        <name>Mn(2+)</name>
        <dbReference type="ChEBI" id="CHEBI:29035"/>
    </ligand>
</feature>
<feature type="glycosylation site" description="N-linked (GlcNAc...) asparagine" evidence="2">
    <location>
        <position position="81"/>
    </location>
</feature>
<feature type="glycosylation site" description="N-linked (GlcNAc...) asparagine" evidence="2">
    <location>
        <position position="90"/>
    </location>
</feature>
<feature type="glycosylation site" description="N-linked (GlcNAc...) asparagine" evidence="2">
    <location>
        <position position="201"/>
    </location>
</feature>
<feature type="mutagenesis site" description="In n2841; F1 adults accumulate eggs in the uterus. Embryos are arrested at the 1-cell embryonic stage. Partial collapse of vulva invagination." evidence="6">
    <original>G</original>
    <variation>E</variation>
    <location>
        <position position="183"/>
    </location>
</feature>
<feature type="mutagenesis site" description="In n2842; reduces axon regeneration after injury." evidence="5">
    <location>
        <begin position="184"/>
        <end position="289"/>
    </location>
</feature>
<feature type="mutagenesis site" description="In n2823; embryos are arrested at the 1-cell embryonic stage." evidence="6">
    <original>V</original>
    <variation>F</variation>
    <location>
        <position position="275"/>
    </location>
</feature>
<gene>
    <name type="primary">sqv-3</name>
    <name type="ORF">R10E11.4</name>
</gene>
<proteinExistence type="evidence at protein level"/>
<name>SQV3_CAEEL</name>
<protein>
    <recommendedName>
        <fullName evidence="8">Xylosylprotein 4-beta-galactosyltransferase</fullName>
        <shortName evidence="7">XGalT-I</shortName>
        <ecNumber evidence="4">2.4.1.133</ecNumber>
    </recommendedName>
    <alternativeName>
        <fullName>Squashed vulva protein 3</fullName>
    </alternativeName>
    <alternativeName>
        <fullName evidence="7">UDP-galactose:beta-N-acetylglucosamine beta-1,4-galactosyltransferase sqv-3</fullName>
    </alternativeName>
</protein>
<dbReference type="EC" id="2.4.1.133" evidence="4"/>
<dbReference type="EMBL" id="AJ005867">
    <property type="protein sequence ID" value="CAA06744.1"/>
    <property type="molecule type" value="mRNA"/>
</dbReference>
<dbReference type="EMBL" id="Z29095">
    <property type="protein sequence ID" value="CAA82350.1"/>
    <property type="molecule type" value="Genomic_DNA"/>
</dbReference>
<dbReference type="PIR" id="S40716">
    <property type="entry name" value="S40716"/>
</dbReference>
<dbReference type="RefSeq" id="NP_499164.1">
    <property type="nucleotide sequence ID" value="NM_066763.7"/>
</dbReference>
<dbReference type="SMR" id="P34548"/>
<dbReference type="FunCoup" id="P34548">
    <property type="interactions" value="2211"/>
</dbReference>
<dbReference type="STRING" id="6239.R10E11.4.1"/>
<dbReference type="CAZy" id="GT7">
    <property type="family name" value="Glycosyltransferase Family 7"/>
</dbReference>
<dbReference type="GlyCosmos" id="P34548">
    <property type="glycosylation" value="3 sites, No reported glycans"/>
</dbReference>
<dbReference type="PaxDb" id="6239-R10E11.4"/>
<dbReference type="EnsemblMetazoa" id="R10E11.4.1">
    <property type="protein sequence ID" value="R10E11.4.1"/>
    <property type="gene ID" value="WBGene00005021"/>
</dbReference>
<dbReference type="GeneID" id="176382"/>
<dbReference type="KEGG" id="cel:CELE_R10E11.4"/>
<dbReference type="UCSC" id="R10E11.4">
    <property type="organism name" value="c. elegans"/>
</dbReference>
<dbReference type="AGR" id="WB:WBGene00005021"/>
<dbReference type="CTD" id="176382"/>
<dbReference type="WormBase" id="R10E11.4">
    <property type="protein sequence ID" value="CE00306"/>
    <property type="gene ID" value="WBGene00005021"/>
    <property type="gene designation" value="sqv-3"/>
</dbReference>
<dbReference type="eggNOG" id="KOG3917">
    <property type="taxonomic scope" value="Eukaryota"/>
</dbReference>
<dbReference type="GeneTree" id="ENSGT00940000157712"/>
<dbReference type="HOGENOM" id="CLU_044391_5_0_1"/>
<dbReference type="InParanoid" id="P34548"/>
<dbReference type="OMA" id="NWLFVCG"/>
<dbReference type="OrthoDB" id="6020664at2759"/>
<dbReference type="PhylomeDB" id="P34548"/>
<dbReference type="Reactome" id="R-CEL-1971475">
    <property type="pathway name" value="A tetrasaccharide linker sequence is required for GAG synthesis"/>
</dbReference>
<dbReference type="UniPathway" id="UPA00378"/>
<dbReference type="PRO" id="PR:P34548"/>
<dbReference type="Proteomes" id="UP000001940">
    <property type="component" value="Chromosome III"/>
</dbReference>
<dbReference type="Bgee" id="WBGene00005021">
    <property type="expression patterns" value="Expressed in germ line (C elegans) and 4 other cell types or tissues"/>
</dbReference>
<dbReference type="GO" id="GO:0005794">
    <property type="term" value="C:Golgi apparatus"/>
    <property type="evidence" value="ECO:0000318"/>
    <property type="project" value="GO_Central"/>
</dbReference>
<dbReference type="GO" id="GO:0016020">
    <property type="term" value="C:membrane"/>
    <property type="evidence" value="ECO:0000314"/>
    <property type="project" value="WormBase"/>
</dbReference>
<dbReference type="GO" id="GO:0008378">
    <property type="term" value="F:galactosyltransferase activity"/>
    <property type="evidence" value="ECO:0000314"/>
    <property type="project" value="WormBase"/>
</dbReference>
<dbReference type="GO" id="GO:0046872">
    <property type="term" value="F:metal ion binding"/>
    <property type="evidence" value="ECO:0007669"/>
    <property type="project" value="UniProtKB-KW"/>
</dbReference>
<dbReference type="GO" id="GO:0046525">
    <property type="term" value="F:xylosylprotein 4-beta-galactosyltransferase activity"/>
    <property type="evidence" value="ECO:0000318"/>
    <property type="project" value="GO_Central"/>
</dbReference>
<dbReference type="GO" id="GO:0005975">
    <property type="term" value="P:carbohydrate metabolic process"/>
    <property type="evidence" value="ECO:0007669"/>
    <property type="project" value="InterPro"/>
</dbReference>
<dbReference type="GO" id="GO:0050650">
    <property type="term" value="P:chondroitin sulfate proteoglycan biosynthetic process"/>
    <property type="evidence" value="ECO:0000315"/>
    <property type="project" value="WormBase"/>
</dbReference>
<dbReference type="GO" id="GO:0018991">
    <property type="term" value="P:egg-laying behavior"/>
    <property type="evidence" value="ECO:0000315"/>
    <property type="project" value="WormBase"/>
</dbReference>
<dbReference type="GO" id="GO:0009792">
    <property type="term" value="P:embryo development ending in birth or egg hatching"/>
    <property type="evidence" value="ECO:0000315"/>
    <property type="project" value="WormBase"/>
</dbReference>
<dbReference type="GO" id="GO:0070085">
    <property type="term" value="P:glycosylation"/>
    <property type="evidence" value="ECO:0000318"/>
    <property type="project" value="GO_Central"/>
</dbReference>
<dbReference type="GO" id="GO:0015012">
    <property type="term" value="P:heparan sulfate proteoglycan biosynthetic process"/>
    <property type="evidence" value="ECO:0000315"/>
    <property type="project" value="WormBase"/>
</dbReference>
<dbReference type="GO" id="GO:0002009">
    <property type="term" value="P:morphogenesis of an epithelium"/>
    <property type="evidence" value="ECO:0000315"/>
    <property type="project" value="WormBase"/>
</dbReference>
<dbReference type="GO" id="GO:0048680">
    <property type="term" value="P:positive regulation of axon regeneration"/>
    <property type="evidence" value="ECO:0000315"/>
    <property type="project" value="UniProtKB"/>
</dbReference>
<dbReference type="GO" id="GO:0006486">
    <property type="term" value="P:protein glycosylation"/>
    <property type="evidence" value="ECO:0007669"/>
    <property type="project" value="UniProtKB-UniPathway"/>
</dbReference>
<dbReference type="GO" id="GO:0030166">
    <property type="term" value="P:proteoglycan biosynthetic process"/>
    <property type="evidence" value="ECO:0000318"/>
    <property type="project" value="GO_Central"/>
</dbReference>
<dbReference type="GO" id="GO:0022604">
    <property type="term" value="P:regulation of cell morphogenesis"/>
    <property type="evidence" value="ECO:0000315"/>
    <property type="project" value="WormBase"/>
</dbReference>
<dbReference type="GO" id="GO:0022414">
    <property type="term" value="P:reproductive process"/>
    <property type="evidence" value="ECO:0000315"/>
    <property type="project" value="WormBase"/>
</dbReference>
<dbReference type="GO" id="GO:0040025">
    <property type="term" value="P:vulval development"/>
    <property type="evidence" value="ECO:0000315"/>
    <property type="project" value="WormBase"/>
</dbReference>
<dbReference type="CDD" id="cd00899">
    <property type="entry name" value="b4GalT"/>
    <property type="match status" value="1"/>
</dbReference>
<dbReference type="Gene3D" id="3.90.550.10">
    <property type="entry name" value="Spore Coat Polysaccharide Biosynthesis Protein SpsA, Chain A"/>
    <property type="match status" value="1"/>
</dbReference>
<dbReference type="InterPro" id="IPR003859">
    <property type="entry name" value="Galactosyl_T"/>
</dbReference>
<dbReference type="InterPro" id="IPR027791">
    <property type="entry name" value="Galactosyl_T_C"/>
</dbReference>
<dbReference type="InterPro" id="IPR027995">
    <property type="entry name" value="Galactosyl_T_N"/>
</dbReference>
<dbReference type="InterPro" id="IPR029044">
    <property type="entry name" value="Nucleotide-diphossugar_trans"/>
</dbReference>
<dbReference type="PANTHER" id="PTHR19300">
    <property type="entry name" value="BETA-1,4-GALACTOSYLTRANSFERASE"/>
    <property type="match status" value="1"/>
</dbReference>
<dbReference type="PANTHER" id="PTHR19300:SF30">
    <property type="entry name" value="BETA-1,4-GALACTOSYLTRANSFERASE 7"/>
    <property type="match status" value="1"/>
</dbReference>
<dbReference type="Pfam" id="PF02709">
    <property type="entry name" value="Glyco_transf_7C"/>
    <property type="match status" value="1"/>
</dbReference>
<dbReference type="Pfam" id="PF13733">
    <property type="entry name" value="Glyco_transf_7N"/>
    <property type="match status" value="1"/>
</dbReference>
<dbReference type="PRINTS" id="PR02050">
    <property type="entry name" value="B14GALTRFASE"/>
</dbReference>
<dbReference type="SUPFAM" id="SSF53448">
    <property type="entry name" value="Nucleotide-diphospho-sugar transferases"/>
    <property type="match status" value="1"/>
</dbReference>